<accession>O46590</accession>
<comment type="function">
    <text evidence="2">Component of the cytochrome c oxidase, the last enzyme in the mitochondrial electron transport chain which drives oxidative phosphorylation. The respiratory chain contains 3 multisubunit complexes succinate dehydrogenase (complex II, CII), ubiquinol-cytochrome c oxidoreductase (cytochrome b-c1 complex, complex III, CIII) and cytochrome c oxidase (complex IV, CIV), that cooperate to transfer electrons derived from NADH and succinate to molecular oxygen, creating an electrochemical gradient over the inner membrane that drives transmembrane transport and the ATP synthase. Cytochrome c oxidase is the component of the respiratory chain that catalyzes the reduction of oxygen to water. Electrons originating from reduced cytochrome c in the intermembrane space (IMS) are transferred via the dinuclear copper A center (CU(A)) of subunit 2 and heme A of subunit 1 to the active site in subunit 1, a binuclear center (BNC) formed by heme A3 and copper B (CU(B)). The BNC reduces molecular oxygen to 2 water molecules using 4 electrons from cytochrome c in the IMS and 4 protons from the mitochondrial matrix.</text>
</comment>
<comment type="pathway">
    <text evidence="2">Energy metabolism; oxidative phosphorylation.</text>
</comment>
<comment type="subunit">
    <text evidence="1 3 4 5">Component of the cytochrome c oxidase (complex IV, CIV), a multisubunit enzyme composed of 14 subunits. The complex is composed of a catalytic core of 3 subunits MT-CO1, MT-CO2 and MT-CO3, encoded in the mitochondrial DNA, and 11 supernumerary subunits COX4I, COX5A, COX5B, COX6A, COX6B, COX6C, COX7A, COX7B, COX7C, COX8 and NDUFA4, which are encoded in the nuclear genome. The complex exists as a monomer or a dimer and forms supercomplexes (SCs) in the inner mitochondrial membrane with NADH-ubiquinone oxidoreductase (complex I, CI) and ubiquinol-cytochrome c oxidoreductase (cytochrome b-c1 complex, complex III, CIII), resulting in different assemblies (supercomplex SCI(1)III(2)IV(1) and megacomplex MCI(2)III(2)IV(2)) (By similarity). Interacts with PHB2; the interaction decreases in absence of SPHK2 (By similarity). Interacts with AFG1L (By similarity). Interacts with ABCB7; this interaction allows the regulation of cellular iron homeostasis and cellular reactive oxygen species (ROS) levels in cardiomyocytes (By similarity). Interacts with FLVCR2; this interaction occurs in the absence of heme and is disrupted upon heme binding. Interacts with IRGC (By similarity).</text>
</comment>
<comment type="subcellular location">
    <subcellularLocation>
        <location evidence="1">Mitochondrion inner membrane</location>
        <topology evidence="1">Single-pass membrane protein</topology>
    </subcellularLocation>
</comment>
<comment type="similarity">
    <text evidence="7">Belongs to the cytochrome c oxidase IV family.</text>
</comment>
<organism>
    <name type="scientific">Saimiri ustus</name>
    <name type="common">Golden-backed squirrel monkey</name>
    <dbReference type="NCBI Taxonomy" id="66265"/>
    <lineage>
        <taxon>Eukaryota</taxon>
        <taxon>Metazoa</taxon>
        <taxon>Chordata</taxon>
        <taxon>Craniata</taxon>
        <taxon>Vertebrata</taxon>
        <taxon>Euteleostomi</taxon>
        <taxon>Mammalia</taxon>
        <taxon>Eutheria</taxon>
        <taxon>Euarchontoglires</taxon>
        <taxon>Primates</taxon>
        <taxon>Haplorrhini</taxon>
        <taxon>Platyrrhini</taxon>
        <taxon>Cebidae</taxon>
        <taxon>Saimiriinae</taxon>
        <taxon>Saimiri</taxon>
    </lineage>
</organism>
<evidence type="ECO:0000250" key="1">
    <source>
        <dbReference type="UniProtKB" id="P00423"/>
    </source>
</evidence>
<evidence type="ECO:0000250" key="2">
    <source>
        <dbReference type="UniProtKB" id="P00424"/>
    </source>
</evidence>
<evidence type="ECO:0000250" key="3">
    <source>
        <dbReference type="UniProtKB" id="P10888"/>
    </source>
</evidence>
<evidence type="ECO:0000250" key="4">
    <source>
        <dbReference type="UniProtKB" id="P13073"/>
    </source>
</evidence>
<evidence type="ECO:0000250" key="5">
    <source>
        <dbReference type="UniProtKB" id="P19783"/>
    </source>
</evidence>
<evidence type="ECO:0000256" key="6">
    <source>
        <dbReference type="SAM" id="MobiDB-lite"/>
    </source>
</evidence>
<evidence type="ECO:0000305" key="7"/>
<feature type="chain" id="PRO_0000194083" description="Cytochrome c oxidase subunit 4 isoform 1, mitochondrial">
    <location>
        <begin position="1" status="less than"/>
        <end position="55" status="greater than"/>
    </location>
</feature>
<feature type="region of interest" description="Disordered" evidence="6">
    <location>
        <begin position="32"/>
        <end position="55"/>
    </location>
</feature>
<feature type="modified residue" description="N6-acetyllysine; alternate" evidence="5">
    <location>
        <position position="4"/>
    </location>
</feature>
<feature type="modified residue" description="N6-succinyllysine; alternate" evidence="5">
    <location>
        <position position="4"/>
    </location>
</feature>
<feature type="modified residue" description="Phosphoserine" evidence="3">
    <location>
        <position position="31"/>
    </location>
</feature>
<feature type="modified residue" description="Phosphoserine" evidence="3">
    <location>
        <position position="33"/>
    </location>
</feature>
<feature type="modified residue" description="N6-acetyllysine; alternate" evidence="4">
    <location>
        <position position="35"/>
    </location>
</feature>
<feature type="modified residue" description="N6-succinyllysine; alternate" evidence="5">
    <location>
        <position position="35"/>
    </location>
</feature>
<feature type="modified residue" description="N6-acetyllysine" evidence="5">
    <location>
        <position position="42"/>
    </location>
</feature>
<feature type="non-terminal residue">
    <location>
        <position position="1"/>
    </location>
</feature>
<feature type="non-terminal residue">
    <location>
        <position position="55"/>
    </location>
</feature>
<dbReference type="EMBL" id="AF042779">
    <property type="protein sequence ID" value="AAB97759.1"/>
    <property type="molecule type" value="Genomic_DNA"/>
</dbReference>
<dbReference type="SMR" id="O46590"/>
<dbReference type="UniPathway" id="UPA00705"/>
<dbReference type="GO" id="GO:0005743">
    <property type="term" value="C:mitochondrial inner membrane"/>
    <property type="evidence" value="ECO:0000250"/>
    <property type="project" value="UniProtKB"/>
</dbReference>
<dbReference type="GO" id="GO:0045277">
    <property type="term" value="C:respiratory chain complex IV"/>
    <property type="evidence" value="ECO:0007669"/>
    <property type="project" value="InterPro"/>
</dbReference>
<dbReference type="GO" id="GO:0006123">
    <property type="term" value="P:mitochondrial electron transport, cytochrome c to oxygen"/>
    <property type="evidence" value="ECO:0007669"/>
    <property type="project" value="InterPro"/>
</dbReference>
<dbReference type="FunFam" id="1.10.442.10:FF:000009">
    <property type="match status" value="1"/>
</dbReference>
<dbReference type="Gene3D" id="1.10.442.10">
    <property type="entry name" value="Cytochrome c oxidase subunit IV"/>
    <property type="match status" value="1"/>
</dbReference>
<dbReference type="InterPro" id="IPR004203">
    <property type="entry name" value="Cyt_c_oxidase_su4_fam"/>
</dbReference>
<dbReference type="InterPro" id="IPR036639">
    <property type="entry name" value="Cyt_c_oxidase_su4_sf"/>
</dbReference>
<dbReference type="PANTHER" id="PTHR10707:SF12">
    <property type="entry name" value="CYTOCHROME C OXIDASE SUBUNIT 4 ISOFORM 1, MITOCHONDRIAL"/>
    <property type="match status" value="1"/>
</dbReference>
<dbReference type="PANTHER" id="PTHR10707">
    <property type="entry name" value="CYTOCHROME C OXIDASE SUBUNIT IV"/>
    <property type="match status" value="1"/>
</dbReference>
<dbReference type="Pfam" id="PF02936">
    <property type="entry name" value="COX4"/>
    <property type="match status" value="1"/>
</dbReference>
<dbReference type="SUPFAM" id="SSF81406">
    <property type="entry name" value="Mitochondrial cytochrome c oxidase subunit IV"/>
    <property type="match status" value="1"/>
</dbReference>
<reference key="1">
    <citation type="journal article" date="1997" name="J. Mol. Evol.">
        <title>Molecular evolution of cytochrome c oxidase subunit IV: evidence for positive selection in simian primates.</title>
        <authorList>
            <person name="Wu W."/>
            <person name="Goodman M."/>
            <person name="Lomax M.I."/>
            <person name="Grossman L.I."/>
        </authorList>
    </citation>
    <scope>NUCLEOTIDE SEQUENCE [GENOMIC DNA]</scope>
</reference>
<keyword id="KW-0007">Acetylation</keyword>
<keyword id="KW-0472">Membrane</keyword>
<keyword id="KW-0496">Mitochondrion</keyword>
<keyword id="KW-0999">Mitochondrion inner membrane</keyword>
<keyword id="KW-0597">Phosphoprotein</keyword>
<keyword id="KW-0812">Transmembrane</keyword>
<keyword id="KW-1133">Transmembrane helix</keyword>
<sequence length="55" mass="6320">SVVKSEDYARPSYVDRRDYPLPDVAHVRHLSASQKALKEKEKASWSSLSMDEKVE</sequence>
<name>COX41_SAIUS</name>
<gene>
    <name type="primary">COX4I1</name>
    <name type="synonym">COX4</name>
</gene>
<proteinExistence type="inferred from homology"/>
<protein>
    <recommendedName>
        <fullName>Cytochrome c oxidase subunit 4 isoform 1, mitochondrial</fullName>
    </recommendedName>
    <alternativeName>
        <fullName>Cytochrome c oxidase polypeptide IV</fullName>
    </alternativeName>
    <alternativeName>
        <fullName>Cytochrome c oxidase subunit IV isoform 1</fullName>
        <shortName>COX IV-1</shortName>
    </alternativeName>
</protein>